<protein>
    <recommendedName>
        <fullName>Uncharacterized protein ORF17</fullName>
    </recommendedName>
</protein>
<proteinExistence type="predicted"/>
<name>VG17_ICHVA</name>
<organism>
    <name type="scientific">Ictalurid herpesvirus 1 (strain Auburn)</name>
    <name type="common">IcHV-1</name>
    <name type="synonym">Channel catfish herpesvirus</name>
    <dbReference type="NCBI Taxonomy" id="766178"/>
    <lineage>
        <taxon>Viruses</taxon>
        <taxon>Duplodnaviria</taxon>
        <taxon>Heunggongvirae</taxon>
        <taxon>Peploviricota</taxon>
        <taxon>Herviviricetes</taxon>
        <taxon>Herpesvirales</taxon>
        <taxon>Alloherpesviridae</taxon>
        <taxon>Ictavirus</taxon>
        <taxon>Ictavirus ictaluridallo1</taxon>
        <taxon>Ictalurid herpesvirus 1</taxon>
    </lineage>
</organism>
<keyword id="KW-1185">Reference proteome</keyword>
<organismHost>
    <name type="scientific">Ictaluridae</name>
    <name type="common">bullhead catfishes</name>
    <dbReference type="NCBI Taxonomy" id="7996"/>
</organismHost>
<gene>
    <name type="primary">ORF17</name>
</gene>
<reference key="1">
    <citation type="journal article" date="1992" name="Virology">
        <title>Channel catfish virus: a new type of herpesvirus.</title>
        <authorList>
            <person name="Davison A.J."/>
        </authorList>
    </citation>
    <scope>NUCLEOTIDE SEQUENCE [LARGE SCALE GENOMIC DNA]</scope>
</reference>
<accession>Q00116</accession>
<feature type="chain" id="PRO_0000222100" description="Uncharacterized protein ORF17">
    <location>
        <begin position="1"/>
        <end position="298"/>
    </location>
</feature>
<dbReference type="EMBL" id="M75136">
    <property type="protein sequence ID" value="AAA88120.1"/>
    <property type="molecule type" value="Genomic_DNA"/>
</dbReference>
<dbReference type="PIR" id="I36787">
    <property type="entry name" value="I36787"/>
</dbReference>
<dbReference type="RefSeq" id="NP_041108.1">
    <property type="nucleotide sequence ID" value="NC_001493.2"/>
</dbReference>
<dbReference type="SMR" id="Q00116"/>
<dbReference type="GeneID" id="1488415"/>
<dbReference type="KEGG" id="vg:1488415"/>
<dbReference type="Proteomes" id="UP000007643">
    <property type="component" value="Segment"/>
</dbReference>
<sequence>MIPPGIPVVQLSFPIGSRIRSISVPTGTHNALDRILSRPSPKMKFTDYLNGALACGVAGAAYKALDNFGWGRVSAVIGGVTVGLCAAFGPKKITELNALSDQMLAEATEDIKRERLTKALSTFTILAASRAPINTWTTRPRERFDALTGIPARWDDALCEMEFDRTCGSGERGLHALHALSGVIVGELERLLVEGHVSTDLAQVYLTMLIVTLFRDDEFGRALLKVDSIILALESRIDTVRLEEIQRVMCASVTRFHGVRPGFETEAFAKMHDAINRCGLYGTARGEPSEVEEPGSTV</sequence>